<organism>
    <name type="scientific">Oryctes rhinoceros</name>
    <name type="common">Coconut rhinoceros beetle</name>
    <dbReference type="NCBI Taxonomy" id="72550"/>
    <lineage>
        <taxon>Eukaryota</taxon>
        <taxon>Metazoa</taxon>
        <taxon>Ecdysozoa</taxon>
        <taxon>Arthropoda</taxon>
        <taxon>Hexapoda</taxon>
        <taxon>Insecta</taxon>
        <taxon>Pterygota</taxon>
        <taxon>Neoptera</taxon>
        <taxon>Endopterygota</taxon>
        <taxon>Coleoptera</taxon>
        <taxon>Polyphaga</taxon>
        <taxon>Scarabaeiformia</taxon>
        <taxon>Scarabaeidae</taxon>
        <taxon>Dynastinae</taxon>
        <taxon>Oryctes</taxon>
    </lineage>
</organism>
<accession>Q86SC0</accession>
<comment type="function">
    <text evidence="1 2">Possesses antifungal activity against phytopathogenic fungi such as P.oryzae, R.solani and B.cinerea but not against phytopathogenic bacteria. Shows weak activity against the insect pathogenic fungus B.bassiana and against S.aureus. Binds chitin.</text>
</comment>
<comment type="subcellular location">
    <subcellularLocation>
        <location evidence="2">Secreted</location>
    </subcellularLocation>
</comment>
<comment type="mass spectrometry">
    <molecule>Scarabaecin, minor form</molecule>
</comment>
<comment type="mass spectrometry">
    <molecule>Scarabaecin, major form</molecule>
</comment>
<name>SCAB_ORYRH</name>
<dbReference type="EMBL" id="AB081620">
    <property type="protein sequence ID" value="BAC54897.1"/>
    <property type="molecule type" value="mRNA"/>
</dbReference>
<dbReference type="PDB" id="1IYC">
    <property type="method" value="NMR"/>
    <property type="chains" value="A=29-64"/>
</dbReference>
<dbReference type="PDBsum" id="1IYC"/>
<dbReference type="SMR" id="Q86SC0"/>
<dbReference type="EvolutionaryTrace" id="Q86SC0"/>
<dbReference type="GO" id="GO:0005576">
    <property type="term" value="C:extracellular region"/>
    <property type="evidence" value="ECO:0000314"/>
    <property type="project" value="UniProtKB"/>
</dbReference>
<dbReference type="GO" id="GO:0008061">
    <property type="term" value="F:chitin binding"/>
    <property type="evidence" value="ECO:0000314"/>
    <property type="project" value="UniProtKB"/>
</dbReference>
<dbReference type="GO" id="GO:0050832">
    <property type="term" value="P:defense response to fungus"/>
    <property type="evidence" value="ECO:0000314"/>
    <property type="project" value="UniProtKB"/>
</dbReference>
<dbReference type="GO" id="GO:0050829">
    <property type="term" value="P:defense response to Gram-negative bacterium"/>
    <property type="evidence" value="ECO:0000314"/>
    <property type="project" value="UniProtKB"/>
</dbReference>
<dbReference type="GO" id="GO:0031640">
    <property type="term" value="P:killing of cells of another organism"/>
    <property type="evidence" value="ECO:0007669"/>
    <property type="project" value="UniProtKB-KW"/>
</dbReference>
<dbReference type="InterPro" id="IPR036508">
    <property type="entry name" value="Chitin-bd_dom_sf"/>
</dbReference>
<dbReference type="SUPFAM" id="SSF57625">
    <property type="entry name" value="Invertebrate chitin-binding proteins"/>
    <property type="match status" value="1"/>
</dbReference>
<sequence>MKTLTFYTLLLCAALYSNFFDCKAVADAELPKLPDDKVLIRSRSNCPKGKVWNGFDCKSPFAFSKK</sequence>
<feature type="signal peptide" evidence="2">
    <location>
        <begin position="1"/>
        <end position="26"/>
    </location>
</feature>
<feature type="peptide" id="PRO_0000259619" description="Scarabaecin, minor form" evidence="2">
    <location>
        <begin position="27"/>
        <end position="64"/>
    </location>
</feature>
<feature type="peptide" id="PRO_0000259620" description="Scarabaecin, major form" evidence="2">
    <location>
        <begin position="29"/>
        <end position="64"/>
    </location>
</feature>
<feature type="disulfide bond" evidence="1">
    <location>
        <begin position="46"/>
        <end position="57"/>
    </location>
</feature>
<feature type="strand" evidence="6">
    <location>
        <begin position="35"/>
        <end position="37"/>
    </location>
</feature>
<feature type="turn" evidence="6">
    <location>
        <begin position="41"/>
        <end position="43"/>
    </location>
</feature>
<feature type="strand" evidence="6">
    <location>
        <begin position="51"/>
        <end position="53"/>
    </location>
</feature>
<feature type="strand" evidence="6">
    <location>
        <begin position="56"/>
        <end position="58"/>
    </location>
</feature>
<feature type="helix" evidence="6">
    <location>
        <begin position="60"/>
        <end position="62"/>
    </location>
</feature>
<proteinExistence type="evidence at protein level"/>
<evidence type="ECO:0000269" key="1">
    <source>
    </source>
</evidence>
<evidence type="ECO:0000269" key="2">
    <source>
    </source>
</evidence>
<evidence type="ECO:0000305" key="3"/>
<evidence type="ECO:0000312" key="4">
    <source>
        <dbReference type="EMBL" id="BAC54897.1"/>
    </source>
</evidence>
<evidence type="ECO:0000312" key="5">
    <source>
        <dbReference type="PDB" id="1IYC"/>
    </source>
</evidence>
<evidence type="ECO:0007829" key="6">
    <source>
        <dbReference type="PDB" id="1IYC"/>
    </source>
</evidence>
<gene>
    <name evidence="4" type="primary">scar</name>
</gene>
<protein>
    <recommendedName>
        <fullName>Scarabaecin</fullName>
    </recommendedName>
    <component>
        <recommendedName>
            <fullName>Scarabaecin, minor form</fullName>
        </recommendedName>
    </component>
    <component>
        <recommendedName>
            <fullName>Scarabaecin, major form</fullName>
        </recommendedName>
    </component>
</protein>
<reference evidence="3 4" key="1">
    <citation type="journal article" date="2003" name="Biochem. Biophys. Res. Commun.">
        <title>Scarabaecin, a novel cysteine-containing antifungal peptide from the rhinoceros beetle, Oryctes rhinoceros.</title>
        <authorList>
            <person name="Tomie T."/>
            <person name="Ishibashi J."/>
            <person name="Furukawa S."/>
            <person name="Kobayashi S."/>
            <person name="Sawahata R."/>
            <person name="Asaoka A."/>
            <person name="Tagawa M."/>
            <person name="Yamakawa M."/>
        </authorList>
    </citation>
    <scope>NUCLEOTIDE SEQUENCE [MRNA]</scope>
    <scope>PROTEIN SEQUENCE OF 27-55 AND 62-64</scope>
    <scope>FUNCTION</scope>
    <scope>SUBCELLULAR LOCATION</scope>
    <scope>MASS SPECTROMETRY</scope>
    <source>
        <tissue evidence="4">Fat body</tissue>
    </source>
</reference>
<reference evidence="5" key="2">
    <citation type="journal article" date="2003" name="J. Biol. Chem.">
        <title>Structural basis for new pattern of conserved amino acid residues related to chitin-binding in the antifungal peptide from the coconut rhinoceros beetle Oryctes rhinoceros.</title>
        <authorList>
            <person name="Hemmi H."/>
            <person name="Ishibashi J."/>
            <person name="Tomie T."/>
            <person name="Yamakawa M."/>
        </authorList>
    </citation>
    <scope>STRUCTURE BY NMR OF 29-64</scope>
    <scope>FUNCTION</scope>
</reference>
<keyword id="KW-0002">3D-structure</keyword>
<keyword id="KW-0044">Antibiotic</keyword>
<keyword id="KW-0929">Antimicrobial</keyword>
<keyword id="KW-0147">Chitin-binding</keyword>
<keyword id="KW-0903">Direct protein sequencing</keyword>
<keyword id="KW-1015">Disulfide bond</keyword>
<keyword id="KW-0295">Fungicide</keyword>
<keyword id="KW-0964">Secreted</keyword>
<keyword id="KW-0732">Signal</keyword>